<comment type="function">
    <text evidence="1">Can catalyze the hydrolysis of ATP in the presence of single-stranded DNA, the ATP-dependent uptake of single-stranded DNA by duplex DNA, and the ATP-dependent hybridization of homologous single-stranded DNAs. It interacts with LexA causing its activation and leading to its autocatalytic cleavage.</text>
</comment>
<comment type="subcellular location">
    <subcellularLocation>
        <location evidence="1">Cytoplasm</location>
    </subcellularLocation>
</comment>
<comment type="similarity">
    <text evidence="1">Belongs to the RecA family.</text>
</comment>
<protein>
    <recommendedName>
        <fullName evidence="1">Protein RecA</fullName>
    </recommendedName>
    <alternativeName>
        <fullName evidence="1">Recombinase A</fullName>
    </alternativeName>
</protein>
<sequence length="352" mass="37854">MAIDENKQKALAAALGQIEKQFGKGSIMRLGEDRSMDVETISTGSLSLDIALGAGGLPMGRIVEIYGPESSGKTTLTLQVIAAAQREGKTCAFIDAEHALDPVYARKLGVDIDNLLCSQPDTGEQALEICDALARSGAVDVIVVDSVAALTPKAEIEGEIGDSHMGLAARMMSQAMRKLAGNLKQSNTLLIFINQIRMKIGVMFGNPETTTGGNALKFYASVRLDIRRIGAVKEGDNVVGSETRVKVVKNKIAAPFKQAEFQILYGEGINFFGELVDLGVKEKLIEKAGAWYSYNGDKIGQGKANAITWLKENPAAAKEIEKKVRELLLNNQDSTPDFAVDGNDAEETEQDF</sequence>
<name>RECA_KLEP3</name>
<keyword id="KW-0067">ATP-binding</keyword>
<keyword id="KW-0963">Cytoplasm</keyword>
<keyword id="KW-0227">DNA damage</keyword>
<keyword id="KW-0233">DNA recombination</keyword>
<keyword id="KW-0234">DNA repair</keyword>
<keyword id="KW-0238">DNA-binding</keyword>
<keyword id="KW-0547">Nucleotide-binding</keyword>
<keyword id="KW-0742">SOS response</keyword>
<organism>
    <name type="scientific">Klebsiella pneumoniae (strain 342)</name>
    <dbReference type="NCBI Taxonomy" id="507522"/>
    <lineage>
        <taxon>Bacteria</taxon>
        <taxon>Pseudomonadati</taxon>
        <taxon>Pseudomonadota</taxon>
        <taxon>Gammaproteobacteria</taxon>
        <taxon>Enterobacterales</taxon>
        <taxon>Enterobacteriaceae</taxon>
        <taxon>Klebsiella/Raoultella group</taxon>
        <taxon>Klebsiella</taxon>
        <taxon>Klebsiella pneumoniae complex</taxon>
    </lineage>
</organism>
<reference key="1">
    <citation type="journal article" date="2008" name="PLoS Genet.">
        <title>Complete genome sequence of the N2-fixing broad host range endophyte Klebsiella pneumoniae 342 and virulence predictions verified in mice.</title>
        <authorList>
            <person name="Fouts D.E."/>
            <person name="Tyler H.L."/>
            <person name="DeBoy R.T."/>
            <person name="Daugherty S."/>
            <person name="Ren Q."/>
            <person name="Badger J.H."/>
            <person name="Durkin A.S."/>
            <person name="Huot H."/>
            <person name="Shrivastava S."/>
            <person name="Kothari S."/>
            <person name="Dodson R.J."/>
            <person name="Mohamoud Y."/>
            <person name="Khouri H."/>
            <person name="Roesch L.F.W."/>
            <person name="Krogfelt K.A."/>
            <person name="Struve C."/>
            <person name="Triplett E.W."/>
            <person name="Methe B.A."/>
        </authorList>
    </citation>
    <scope>NUCLEOTIDE SEQUENCE [LARGE SCALE GENOMIC DNA]</scope>
    <source>
        <strain>342</strain>
    </source>
</reference>
<dbReference type="EMBL" id="CP000964">
    <property type="protein sequence ID" value="ACI07857.1"/>
    <property type="molecule type" value="Genomic_DNA"/>
</dbReference>
<dbReference type="SMR" id="B5XVB6"/>
<dbReference type="KEGG" id="kpe:KPK_1096"/>
<dbReference type="HOGENOM" id="CLU_040469_3_2_6"/>
<dbReference type="Proteomes" id="UP000001734">
    <property type="component" value="Chromosome"/>
</dbReference>
<dbReference type="GO" id="GO:0005829">
    <property type="term" value="C:cytosol"/>
    <property type="evidence" value="ECO:0007669"/>
    <property type="project" value="TreeGrafter"/>
</dbReference>
<dbReference type="GO" id="GO:0005524">
    <property type="term" value="F:ATP binding"/>
    <property type="evidence" value="ECO:0007669"/>
    <property type="project" value="UniProtKB-UniRule"/>
</dbReference>
<dbReference type="GO" id="GO:0016887">
    <property type="term" value="F:ATP hydrolysis activity"/>
    <property type="evidence" value="ECO:0007669"/>
    <property type="project" value="InterPro"/>
</dbReference>
<dbReference type="GO" id="GO:0140664">
    <property type="term" value="F:ATP-dependent DNA damage sensor activity"/>
    <property type="evidence" value="ECO:0007669"/>
    <property type="project" value="InterPro"/>
</dbReference>
<dbReference type="GO" id="GO:0003684">
    <property type="term" value="F:damaged DNA binding"/>
    <property type="evidence" value="ECO:0007669"/>
    <property type="project" value="UniProtKB-UniRule"/>
</dbReference>
<dbReference type="GO" id="GO:0003697">
    <property type="term" value="F:single-stranded DNA binding"/>
    <property type="evidence" value="ECO:0007669"/>
    <property type="project" value="UniProtKB-UniRule"/>
</dbReference>
<dbReference type="GO" id="GO:0006310">
    <property type="term" value="P:DNA recombination"/>
    <property type="evidence" value="ECO:0007669"/>
    <property type="project" value="UniProtKB-UniRule"/>
</dbReference>
<dbReference type="GO" id="GO:0006281">
    <property type="term" value="P:DNA repair"/>
    <property type="evidence" value="ECO:0007669"/>
    <property type="project" value="UniProtKB-UniRule"/>
</dbReference>
<dbReference type="GO" id="GO:0009432">
    <property type="term" value="P:SOS response"/>
    <property type="evidence" value="ECO:0007669"/>
    <property type="project" value="UniProtKB-UniRule"/>
</dbReference>
<dbReference type="CDD" id="cd00983">
    <property type="entry name" value="RecA"/>
    <property type="match status" value="1"/>
</dbReference>
<dbReference type="FunFam" id="3.40.50.300:FF:000087">
    <property type="entry name" value="Recombinase RecA"/>
    <property type="match status" value="1"/>
</dbReference>
<dbReference type="Gene3D" id="3.40.50.300">
    <property type="entry name" value="P-loop containing nucleotide triphosphate hydrolases"/>
    <property type="match status" value="1"/>
</dbReference>
<dbReference type="HAMAP" id="MF_00268">
    <property type="entry name" value="RecA"/>
    <property type="match status" value="1"/>
</dbReference>
<dbReference type="InterPro" id="IPR003593">
    <property type="entry name" value="AAA+_ATPase"/>
</dbReference>
<dbReference type="InterPro" id="IPR013765">
    <property type="entry name" value="DNA_recomb/repair_RecA"/>
</dbReference>
<dbReference type="InterPro" id="IPR020584">
    <property type="entry name" value="DNA_recomb/repair_RecA_CS"/>
</dbReference>
<dbReference type="InterPro" id="IPR027417">
    <property type="entry name" value="P-loop_NTPase"/>
</dbReference>
<dbReference type="InterPro" id="IPR049261">
    <property type="entry name" value="RecA-like_C"/>
</dbReference>
<dbReference type="InterPro" id="IPR049428">
    <property type="entry name" value="RecA-like_N"/>
</dbReference>
<dbReference type="InterPro" id="IPR020588">
    <property type="entry name" value="RecA_ATP-bd"/>
</dbReference>
<dbReference type="InterPro" id="IPR023400">
    <property type="entry name" value="RecA_C_sf"/>
</dbReference>
<dbReference type="InterPro" id="IPR020587">
    <property type="entry name" value="RecA_monomer-monomer_interface"/>
</dbReference>
<dbReference type="NCBIfam" id="TIGR02012">
    <property type="entry name" value="tigrfam_recA"/>
    <property type="match status" value="1"/>
</dbReference>
<dbReference type="PANTHER" id="PTHR45900:SF1">
    <property type="entry name" value="MITOCHONDRIAL DNA REPAIR PROTEIN RECA HOMOLOG-RELATED"/>
    <property type="match status" value="1"/>
</dbReference>
<dbReference type="PANTHER" id="PTHR45900">
    <property type="entry name" value="RECA"/>
    <property type="match status" value="1"/>
</dbReference>
<dbReference type="Pfam" id="PF00154">
    <property type="entry name" value="RecA"/>
    <property type="match status" value="1"/>
</dbReference>
<dbReference type="Pfam" id="PF21096">
    <property type="entry name" value="RecA_C"/>
    <property type="match status" value="1"/>
</dbReference>
<dbReference type="PRINTS" id="PR00142">
    <property type="entry name" value="RECA"/>
</dbReference>
<dbReference type="SMART" id="SM00382">
    <property type="entry name" value="AAA"/>
    <property type="match status" value="1"/>
</dbReference>
<dbReference type="SUPFAM" id="SSF52540">
    <property type="entry name" value="P-loop containing nucleoside triphosphate hydrolases"/>
    <property type="match status" value="1"/>
</dbReference>
<dbReference type="SUPFAM" id="SSF54752">
    <property type="entry name" value="RecA protein, C-terminal domain"/>
    <property type="match status" value="1"/>
</dbReference>
<dbReference type="PROSITE" id="PS00321">
    <property type="entry name" value="RECA_1"/>
    <property type="match status" value="1"/>
</dbReference>
<dbReference type="PROSITE" id="PS50162">
    <property type="entry name" value="RECA_2"/>
    <property type="match status" value="1"/>
</dbReference>
<dbReference type="PROSITE" id="PS50163">
    <property type="entry name" value="RECA_3"/>
    <property type="match status" value="1"/>
</dbReference>
<accession>B5XVB6</accession>
<gene>
    <name evidence="1" type="primary">recA</name>
    <name type="ordered locus">KPK_1096</name>
</gene>
<proteinExistence type="inferred from homology"/>
<evidence type="ECO:0000255" key="1">
    <source>
        <dbReference type="HAMAP-Rule" id="MF_00268"/>
    </source>
</evidence>
<evidence type="ECO:0000256" key="2">
    <source>
        <dbReference type="SAM" id="MobiDB-lite"/>
    </source>
</evidence>
<feature type="chain" id="PRO_1000114342" description="Protein RecA">
    <location>
        <begin position="1"/>
        <end position="352"/>
    </location>
</feature>
<feature type="region of interest" description="Disordered" evidence="2">
    <location>
        <begin position="333"/>
        <end position="352"/>
    </location>
</feature>
<feature type="compositionally biased region" description="Acidic residues" evidence="2">
    <location>
        <begin position="343"/>
        <end position="352"/>
    </location>
</feature>
<feature type="binding site" evidence="1">
    <location>
        <begin position="67"/>
        <end position="74"/>
    </location>
    <ligand>
        <name>ATP</name>
        <dbReference type="ChEBI" id="CHEBI:30616"/>
    </ligand>
</feature>